<evidence type="ECO:0000255" key="1">
    <source>
        <dbReference type="HAMAP-Rule" id="MF_01309"/>
    </source>
</evidence>
<evidence type="ECO:0000305" key="2"/>
<comment type="function">
    <text evidence="1">Binds the lower part of the 30S subunit head. Binds mRNA in the 70S ribosome, positioning it for translation.</text>
</comment>
<comment type="subunit">
    <text evidence="1">Part of the 30S ribosomal subunit. Forms a tight complex with proteins S10 and S14.</text>
</comment>
<comment type="similarity">
    <text evidence="1">Belongs to the universal ribosomal protein uS3 family.</text>
</comment>
<organism>
    <name type="scientific">Endomicrobium trichonymphae</name>
    <dbReference type="NCBI Taxonomy" id="1408204"/>
    <lineage>
        <taxon>Bacteria</taxon>
        <taxon>Pseudomonadati</taxon>
        <taxon>Elusimicrobiota</taxon>
        <taxon>Endomicrobiia</taxon>
        <taxon>Endomicrobiales</taxon>
        <taxon>Endomicrobiaceae</taxon>
        <taxon>Candidatus Endomicrobiellum</taxon>
    </lineage>
</organism>
<proteinExistence type="inferred from homology"/>
<sequence>MGHKIHPKSIRLGYIKDWESKWFNLKEMPNFIEEDYRIRVYLKNRLKLASVSKIVIERPGKYLRVSIYTARPGIVIGKGGQGIESLRKEIETMTAKKTFVNIMEIKRPEIDAQLASENIAFQLEKQIAFRRVMKRTIEKAMMSGVQGIKVMVSGRLGGAEIARTEWLKEGRIPLQTFRADIDYGFSEACTPMGHIGVKVWIFKKEFFKKTAKELAEDAKVVVDLDTAAKQG</sequence>
<protein>
    <recommendedName>
        <fullName evidence="1">Small ribosomal subunit protein uS3</fullName>
    </recommendedName>
    <alternativeName>
        <fullName evidence="2">30S ribosomal protein S3</fullName>
    </alternativeName>
</protein>
<dbReference type="EMBL" id="AP009510">
    <property type="protein sequence ID" value="BAG13571.1"/>
    <property type="molecule type" value="Genomic_DNA"/>
</dbReference>
<dbReference type="RefSeq" id="WP_015423100.1">
    <property type="nucleotide sequence ID" value="NC_020419.1"/>
</dbReference>
<dbReference type="SMR" id="B1GZ89"/>
<dbReference type="STRING" id="471821.TGRD_088"/>
<dbReference type="KEGG" id="rsd:TGRD_088"/>
<dbReference type="PATRIC" id="fig|471821.5.peg.132"/>
<dbReference type="HOGENOM" id="CLU_058591_0_2_0"/>
<dbReference type="Proteomes" id="UP000001691">
    <property type="component" value="Chromosome"/>
</dbReference>
<dbReference type="GO" id="GO:0022627">
    <property type="term" value="C:cytosolic small ribosomal subunit"/>
    <property type="evidence" value="ECO:0007669"/>
    <property type="project" value="TreeGrafter"/>
</dbReference>
<dbReference type="GO" id="GO:0003729">
    <property type="term" value="F:mRNA binding"/>
    <property type="evidence" value="ECO:0007669"/>
    <property type="project" value="UniProtKB-UniRule"/>
</dbReference>
<dbReference type="GO" id="GO:0019843">
    <property type="term" value="F:rRNA binding"/>
    <property type="evidence" value="ECO:0007669"/>
    <property type="project" value="UniProtKB-UniRule"/>
</dbReference>
<dbReference type="GO" id="GO:0003735">
    <property type="term" value="F:structural constituent of ribosome"/>
    <property type="evidence" value="ECO:0007669"/>
    <property type="project" value="InterPro"/>
</dbReference>
<dbReference type="GO" id="GO:0006412">
    <property type="term" value="P:translation"/>
    <property type="evidence" value="ECO:0007669"/>
    <property type="project" value="UniProtKB-UniRule"/>
</dbReference>
<dbReference type="CDD" id="cd02412">
    <property type="entry name" value="KH-II_30S_S3"/>
    <property type="match status" value="1"/>
</dbReference>
<dbReference type="FunFam" id="3.30.300.20:FF:000001">
    <property type="entry name" value="30S ribosomal protein S3"/>
    <property type="match status" value="1"/>
</dbReference>
<dbReference type="Gene3D" id="3.30.300.20">
    <property type="match status" value="1"/>
</dbReference>
<dbReference type="Gene3D" id="3.30.1140.32">
    <property type="entry name" value="Ribosomal protein S3, C-terminal domain"/>
    <property type="match status" value="1"/>
</dbReference>
<dbReference type="HAMAP" id="MF_01309_B">
    <property type="entry name" value="Ribosomal_uS3_B"/>
    <property type="match status" value="1"/>
</dbReference>
<dbReference type="InterPro" id="IPR004087">
    <property type="entry name" value="KH_dom"/>
</dbReference>
<dbReference type="InterPro" id="IPR015946">
    <property type="entry name" value="KH_dom-like_a/b"/>
</dbReference>
<dbReference type="InterPro" id="IPR004044">
    <property type="entry name" value="KH_dom_type_2"/>
</dbReference>
<dbReference type="InterPro" id="IPR009019">
    <property type="entry name" value="KH_sf_prok-type"/>
</dbReference>
<dbReference type="InterPro" id="IPR036419">
    <property type="entry name" value="Ribosomal_S3_C_sf"/>
</dbReference>
<dbReference type="InterPro" id="IPR005704">
    <property type="entry name" value="Ribosomal_uS3_bac-typ"/>
</dbReference>
<dbReference type="InterPro" id="IPR001351">
    <property type="entry name" value="Ribosomal_uS3_C"/>
</dbReference>
<dbReference type="InterPro" id="IPR018280">
    <property type="entry name" value="Ribosomal_uS3_CS"/>
</dbReference>
<dbReference type="NCBIfam" id="TIGR01009">
    <property type="entry name" value="rpsC_bact"/>
    <property type="match status" value="1"/>
</dbReference>
<dbReference type="PANTHER" id="PTHR11760">
    <property type="entry name" value="30S/40S RIBOSOMAL PROTEIN S3"/>
    <property type="match status" value="1"/>
</dbReference>
<dbReference type="PANTHER" id="PTHR11760:SF19">
    <property type="entry name" value="SMALL RIBOSOMAL SUBUNIT PROTEIN US3C"/>
    <property type="match status" value="1"/>
</dbReference>
<dbReference type="Pfam" id="PF07650">
    <property type="entry name" value="KH_2"/>
    <property type="match status" value="1"/>
</dbReference>
<dbReference type="Pfam" id="PF00189">
    <property type="entry name" value="Ribosomal_S3_C"/>
    <property type="match status" value="1"/>
</dbReference>
<dbReference type="SMART" id="SM00322">
    <property type="entry name" value="KH"/>
    <property type="match status" value="1"/>
</dbReference>
<dbReference type="SUPFAM" id="SSF54814">
    <property type="entry name" value="Prokaryotic type KH domain (KH-domain type II)"/>
    <property type="match status" value="1"/>
</dbReference>
<dbReference type="SUPFAM" id="SSF54821">
    <property type="entry name" value="Ribosomal protein S3 C-terminal domain"/>
    <property type="match status" value="1"/>
</dbReference>
<dbReference type="PROSITE" id="PS50823">
    <property type="entry name" value="KH_TYPE_2"/>
    <property type="match status" value="1"/>
</dbReference>
<dbReference type="PROSITE" id="PS00548">
    <property type="entry name" value="RIBOSOMAL_S3"/>
    <property type="match status" value="1"/>
</dbReference>
<gene>
    <name evidence="1" type="primary">rpsC</name>
    <name type="ordered locus">TGRD_088</name>
</gene>
<name>RS3_ENDTX</name>
<keyword id="KW-0687">Ribonucleoprotein</keyword>
<keyword id="KW-0689">Ribosomal protein</keyword>
<keyword id="KW-0694">RNA-binding</keyword>
<keyword id="KW-0699">rRNA-binding</keyword>
<feature type="chain" id="PRO_1000141030" description="Small ribosomal subunit protein uS3">
    <location>
        <begin position="1"/>
        <end position="231"/>
    </location>
</feature>
<feature type="domain" description="KH type-2" evidence="1">
    <location>
        <begin position="38"/>
        <end position="106"/>
    </location>
</feature>
<accession>B1GZ89</accession>
<reference key="1">
    <citation type="journal article" date="2008" name="Proc. Natl. Acad. Sci. U.S.A.">
        <title>Complete genome of the uncultured termite group 1 bacteria in a single host protist cell.</title>
        <authorList>
            <person name="Hongoh Y."/>
            <person name="Sharma V.K."/>
            <person name="Prakash T."/>
            <person name="Noda S."/>
            <person name="Taylor T.D."/>
            <person name="Kudo T."/>
            <person name="Sakaki Y."/>
            <person name="Toyoda A."/>
            <person name="Hattori M."/>
            <person name="Ohkuma M."/>
        </authorList>
    </citation>
    <scope>NUCLEOTIDE SEQUENCE [LARGE SCALE GENOMIC DNA]</scope>
</reference>